<name>DAPF_BURCM</name>
<gene>
    <name evidence="1" type="primary">dapF</name>
    <name type="ordered locus">Bamb_3131</name>
</gene>
<dbReference type="EC" id="5.1.1.7" evidence="1"/>
<dbReference type="EMBL" id="CP000440">
    <property type="protein sequence ID" value="ABI88687.1"/>
    <property type="molecule type" value="Genomic_DNA"/>
</dbReference>
<dbReference type="RefSeq" id="WP_011658192.1">
    <property type="nucleotide sequence ID" value="NC_008390.1"/>
</dbReference>
<dbReference type="SMR" id="Q0BAY6"/>
<dbReference type="GeneID" id="93084672"/>
<dbReference type="KEGG" id="bam:Bamb_3131"/>
<dbReference type="PATRIC" id="fig|339670.21.peg.1727"/>
<dbReference type="eggNOG" id="COG0253">
    <property type="taxonomic scope" value="Bacteria"/>
</dbReference>
<dbReference type="UniPathway" id="UPA00034">
    <property type="reaction ID" value="UER00025"/>
</dbReference>
<dbReference type="Proteomes" id="UP000000662">
    <property type="component" value="Chromosome 1"/>
</dbReference>
<dbReference type="GO" id="GO:0005829">
    <property type="term" value="C:cytosol"/>
    <property type="evidence" value="ECO:0007669"/>
    <property type="project" value="TreeGrafter"/>
</dbReference>
<dbReference type="GO" id="GO:0008837">
    <property type="term" value="F:diaminopimelate epimerase activity"/>
    <property type="evidence" value="ECO:0007669"/>
    <property type="project" value="UniProtKB-UniRule"/>
</dbReference>
<dbReference type="GO" id="GO:0009089">
    <property type="term" value="P:lysine biosynthetic process via diaminopimelate"/>
    <property type="evidence" value="ECO:0007669"/>
    <property type="project" value="UniProtKB-UniRule"/>
</dbReference>
<dbReference type="FunFam" id="3.10.310.10:FF:000001">
    <property type="entry name" value="Diaminopimelate epimerase"/>
    <property type="match status" value="1"/>
</dbReference>
<dbReference type="Gene3D" id="3.10.310.10">
    <property type="entry name" value="Diaminopimelate Epimerase, Chain A, domain 1"/>
    <property type="match status" value="2"/>
</dbReference>
<dbReference type="HAMAP" id="MF_00197">
    <property type="entry name" value="DAP_epimerase"/>
    <property type="match status" value="1"/>
</dbReference>
<dbReference type="InterPro" id="IPR018510">
    <property type="entry name" value="DAP_epimerase_AS"/>
</dbReference>
<dbReference type="InterPro" id="IPR001653">
    <property type="entry name" value="DAP_epimerase_DapF"/>
</dbReference>
<dbReference type="NCBIfam" id="TIGR00652">
    <property type="entry name" value="DapF"/>
    <property type="match status" value="1"/>
</dbReference>
<dbReference type="PANTHER" id="PTHR31689:SF0">
    <property type="entry name" value="DIAMINOPIMELATE EPIMERASE"/>
    <property type="match status" value="1"/>
</dbReference>
<dbReference type="PANTHER" id="PTHR31689">
    <property type="entry name" value="DIAMINOPIMELATE EPIMERASE, CHLOROPLASTIC"/>
    <property type="match status" value="1"/>
</dbReference>
<dbReference type="Pfam" id="PF01678">
    <property type="entry name" value="DAP_epimerase"/>
    <property type="match status" value="2"/>
</dbReference>
<dbReference type="SUPFAM" id="SSF54506">
    <property type="entry name" value="Diaminopimelate epimerase-like"/>
    <property type="match status" value="1"/>
</dbReference>
<dbReference type="PROSITE" id="PS01326">
    <property type="entry name" value="DAP_EPIMERASE"/>
    <property type="match status" value="1"/>
</dbReference>
<comment type="function">
    <text evidence="1">Catalyzes the stereoinversion of LL-2,6-diaminopimelate (L,L-DAP) to meso-diaminopimelate (meso-DAP), a precursor of L-lysine and an essential component of the bacterial peptidoglycan.</text>
</comment>
<comment type="catalytic activity">
    <reaction evidence="1">
        <text>(2S,6S)-2,6-diaminopimelate = meso-2,6-diaminopimelate</text>
        <dbReference type="Rhea" id="RHEA:15393"/>
        <dbReference type="ChEBI" id="CHEBI:57609"/>
        <dbReference type="ChEBI" id="CHEBI:57791"/>
        <dbReference type="EC" id="5.1.1.7"/>
    </reaction>
</comment>
<comment type="pathway">
    <text evidence="1">Amino-acid biosynthesis; L-lysine biosynthesis via DAP pathway; DL-2,6-diaminopimelate from LL-2,6-diaminopimelate: step 1/1.</text>
</comment>
<comment type="subunit">
    <text evidence="1">Homodimer.</text>
</comment>
<comment type="subcellular location">
    <subcellularLocation>
        <location evidence="1">Cytoplasm</location>
    </subcellularLocation>
</comment>
<comment type="similarity">
    <text evidence="1">Belongs to the diaminopimelate epimerase family.</text>
</comment>
<evidence type="ECO:0000255" key="1">
    <source>
        <dbReference type="HAMAP-Rule" id="MF_00197"/>
    </source>
</evidence>
<proteinExistence type="inferred from homology"/>
<organism>
    <name type="scientific">Burkholderia ambifaria (strain ATCC BAA-244 / DSM 16087 / CCUG 44356 / LMG 19182 / AMMD)</name>
    <name type="common">Burkholderia cepacia (strain AMMD)</name>
    <dbReference type="NCBI Taxonomy" id="339670"/>
    <lineage>
        <taxon>Bacteria</taxon>
        <taxon>Pseudomonadati</taxon>
        <taxon>Pseudomonadota</taxon>
        <taxon>Betaproteobacteria</taxon>
        <taxon>Burkholderiales</taxon>
        <taxon>Burkholderiaceae</taxon>
        <taxon>Burkholderia</taxon>
        <taxon>Burkholderia cepacia complex</taxon>
    </lineage>
</organism>
<sequence>MKLSFTKMHGAGNDFVVLDGYSRALPPLTEAQVRALANRHFGIGADQLLLVEKPTVDGADFKYRIFNCDGGEVEHCGNGARCFVKFVSDRGLTDKRSVRVQVMKGLITLTLQDNGEVVVDMGAPVFAPAQVPFDVSGLDGRAEGRDTLWPLDVGGATRWISAVSMGNPHAVQVVDDVEAYPVLEEGPLIERHARFPQRVNAGFMQIVSRHEVKLRVYERGAGETLACGTGACAAVAAGIRRGLLDSPVTVHTHGGTLTIGWDGARDEAAALMMAGPAATVFEGEIDLTA</sequence>
<reference key="1">
    <citation type="submission" date="2006-08" db="EMBL/GenBank/DDBJ databases">
        <title>Complete sequence of chromosome 1 of Burkholderia cepacia AMMD.</title>
        <authorList>
            <person name="Copeland A."/>
            <person name="Lucas S."/>
            <person name="Lapidus A."/>
            <person name="Barry K."/>
            <person name="Detter J.C."/>
            <person name="Glavina del Rio T."/>
            <person name="Hammon N."/>
            <person name="Israni S."/>
            <person name="Pitluck S."/>
            <person name="Bruce D."/>
            <person name="Chain P."/>
            <person name="Malfatti S."/>
            <person name="Shin M."/>
            <person name="Vergez L."/>
            <person name="Schmutz J."/>
            <person name="Larimer F."/>
            <person name="Land M."/>
            <person name="Hauser L."/>
            <person name="Kyrpides N."/>
            <person name="Kim E."/>
            <person name="Parke J."/>
            <person name="Coenye T."/>
            <person name="Konstantinidis K."/>
            <person name="Ramette A."/>
            <person name="Tiedje J."/>
            <person name="Richardson P."/>
        </authorList>
    </citation>
    <scope>NUCLEOTIDE SEQUENCE [LARGE SCALE GENOMIC DNA]</scope>
    <source>
        <strain>ATCC BAA-244 / DSM 16087 / CCUG 44356 / LMG 19182 / AMMD</strain>
    </source>
</reference>
<accession>Q0BAY6</accession>
<feature type="chain" id="PRO_1000011853" description="Diaminopimelate epimerase">
    <location>
        <begin position="1"/>
        <end position="289"/>
    </location>
</feature>
<feature type="active site" description="Proton donor" evidence="1">
    <location>
        <position position="76"/>
    </location>
</feature>
<feature type="active site" description="Proton acceptor" evidence="1">
    <location>
        <position position="227"/>
    </location>
</feature>
<feature type="binding site" evidence="1">
    <location>
        <position position="13"/>
    </location>
    <ligand>
        <name>substrate</name>
    </ligand>
</feature>
<feature type="binding site" evidence="1">
    <location>
        <position position="47"/>
    </location>
    <ligand>
        <name>substrate</name>
    </ligand>
</feature>
<feature type="binding site" evidence="1">
    <location>
        <position position="67"/>
    </location>
    <ligand>
        <name>substrate</name>
    </ligand>
</feature>
<feature type="binding site" evidence="1">
    <location>
        <begin position="77"/>
        <end position="78"/>
    </location>
    <ligand>
        <name>substrate</name>
    </ligand>
</feature>
<feature type="binding site" evidence="1">
    <location>
        <position position="167"/>
    </location>
    <ligand>
        <name>substrate</name>
    </ligand>
</feature>
<feature type="binding site" evidence="1">
    <location>
        <position position="200"/>
    </location>
    <ligand>
        <name>substrate</name>
    </ligand>
</feature>
<feature type="binding site" evidence="1">
    <location>
        <begin position="218"/>
        <end position="219"/>
    </location>
    <ligand>
        <name>substrate</name>
    </ligand>
</feature>
<feature type="binding site" evidence="1">
    <location>
        <begin position="228"/>
        <end position="229"/>
    </location>
    <ligand>
        <name>substrate</name>
    </ligand>
</feature>
<feature type="site" description="Could be important to modulate the pK values of the two catalytic cysteine residues" evidence="1">
    <location>
        <position position="169"/>
    </location>
</feature>
<feature type="site" description="Could be important to modulate the pK values of the two catalytic cysteine residues" evidence="1">
    <location>
        <position position="218"/>
    </location>
</feature>
<protein>
    <recommendedName>
        <fullName evidence="1">Diaminopimelate epimerase</fullName>
        <shortName evidence="1">DAP epimerase</shortName>
        <ecNumber evidence="1">5.1.1.7</ecNumber>
    </recommendedName>
    <alternativeName>
        <fullName evidence="1">PLP-independent amino acid racemase</fullName>
    </alternativeName>
</protein>
<keyword id="KW-0028">Amino-acid biosynthesis</keyword>
<keyword id="KW-0963">Cytoplasm</keyword>
<keyword id="KW-0413">Isomerase</keyword>
<keyword id="KW-0457">Lysine biosynthesis</keyword>